<dbReference type="EMBL" id="M10260">
    <property type="protein sequence ID" value="AAA66877.1"/>
    <property type="status" value="ALT_FRAME"/>
    <property type="molecule type" value="Genomic_RNA"/>
</dbReference>
<dbReference type="EMBL" id="M14779">
    <property type="protein sequence ID" value="AAA47276.1"/>
    <property type="status" value="ALT_FRAME"/>
    <property type="molecule type" value="Genomic_RNA"/>
</dbReference>
<dbReference type="EMBL" id="M32860">
    <property type="protein sequence ID" value="AAA47267.1"/>
    <property type="molecule type" value="Genomic_RNA"/>
</dbReference>
<dbReference type="EMBL" id="M35963">
    <property type="protein sequence ID" value="AAA47242.1"/>
    <property type="molecule type" value="Genomic_RNA"/>
</dbReference>
<dbReference type="EMBL" id="EF494445">
    <property type="protein sequence ID" value="ABP48923.1"/>
    <property type="molecule type" value="Genomic_RNA"/>
</dbReference>
<dbReference type="EMBL" id="AH002406">
    <property type="protein sequence ID" value="AAA47240.1"/>
    <property type="molecule type" value="Genomic_RNA"/>
</dbReference>
<dbReference type="PIR" id="A04122">
    <property type="entry name" value="HMXRH1"/>
</dbReference>
<dbReference type="PIR" id="A34829">
    <property type="entry name" value="HMXRL1"/>
</dbReference>
<dbReference type="PDB" id="4GU3">
    <property type="method" value="X-ray"/>
    <property type="resolution" value="3.60 A"/>
    <property type="chains" value="A/B/C=261-470"/>
</dbReference>
<dbReference type="PDB" id="4GU4">
    <property type="method" value="X-ray"/>
    <property type="resolution" value="3.50 A"/>
    <property type="chains" value="A/B/C=261-470"/>
</dbReference>
<dbReference type="PDB" id="4ODB">
    <property type="method" value="X-ray"/>
    <property type="resolution" value="3.20 A"/>
    <property type="chains" value="A/B/C=308-470"/>
</dbReference>
<dbReference type="PDB" id="4XC5">
    <property type="method" value="X-ray"/>
    <property type="resolution" value="2.20 A"/>
    <property type="chains" value="A/B/C=308-470"/>
</dbReference>
<dbReference type="PDB" id="5MHS">
    <property type="method" value="X-ray"/>
    <property type="resolution" value="3.70 A"/>
    <property type="chains" value="A/B/C=308-470"/>
</dbReference>
<dbReference type="PDB" id="6GAJ">
    <property type="method" value="X-ray"/>
    <property type="resolution" value="1.35 A"/>
    <property type="chains" value="A/B/C=29-159"/>
</dbReference>
<dbReference type="PDB" id="6GAK">
    <property type="method" value="X-ray"/>
    <property type="resolution" value="1.43 A"/>
    <property type="chains" value="A/B/C=29-159"/>
</dbReference>
<dbReference type="PDB" id="6GAO">
    <property type="method" value="X-ray"/>
    <property type="resolution" value="2.10 A"/>
    <property type="chains" value="A/B/C=29-264"/>
</dbReference>
<dbReference type="PDBsum" id="4GU3"/>
<dbReference type="PDBsum" id="4GU4"/>
<dbReference type="PDBsum" id="4ODB"/>
<dbReference type="PDBsum" id="4XC5"/>
<dbReference type="PDBsum" id="5MHS"/>
<dbReference type="PDBsum" id="6GAJ"/>
<dbReference type="PDBsum" id="6GAK"/>
<dbReference type="PDBsum" id="6GAO"/>
<dbReference type="SMR" id="P04506"/>
<dbReference type="GlyCosmos" id="P04506">
    <property type="glycosylation" value="4 sites, No reported glycans"/>
</dbReference>
<dbReference type="ABCD" id="P04506">
    <property type="antibodies" value="1 sequenced antibody"/>
</dbReference>
<dbReference type="EvolutionaryTrace" id="P04506"/>
<dbReference type="Proteomes" id="UP000007253">
    <property type="component" value="Genome"/>
</dbReference>
<dbReference type="GO" id="GO:0019028">
    <property type="term" value="C:viral capsid"/>
    <property type="evidence" value="ECO:0000314"/>
    <property type="project" value="CACAO"/>
</dbReference>
<dbReference type="GO" id="GO:0039624">
    <property type="term" value="C:viral outer capsid"/>
    <property type="evidence" value="ECO:0007669"/>
    <property type="project" value="UniProtKB-KW"/>
</dbReference>
<dbReference type="GO" id="GO:0007155">
    <property type="term" value="P:cell adhesion"/>
    <property type="evidence" value="ECO:0007669"/>
    <property type="project" value="InterPro"/>
</dbReference>
<dbReference type="GO" id="GO:0046718">
    <property type="term" value="P:symbiont entry into host cell"/>
    <property type="evidence" value="ECO:0007669"/>
    <property type="project" value="UniProtKB-KW"/>
</dbReference>
<dbReference type="GO" id="GO:0019062">
    <property type="term" value="P:virion attachment to host cell"/>
    <property type="evidence" value="ECO:0007669"/>
    <property type="project" value="UniProtKB-KW"/>
</dbReference>
<dbReference type="FunFam" id="1.20.5.340:FF:000100">
    <property type="entry name" value="Outer capsid protein sigma-1"/>
    <property type="match status" value="1"/>
</dbReference>
<dbReference type="Gene3D" id="1.20.5.340">
    <property type="match status" value="1"/>
</dbReference>
<dbReference type="Gene3D" id="1.20.1270.70">
    <property type="entry name" value="Designed single chain three-helix bundle"/>
    <property type="match status" value="1"/>
</dbReference>
<dbReference type="Gene3D" id="2.10.25.20">
    <property type="entry name" value="reovirus attachment protein sigma1, domain 1"/>
    <property type="match status" value="1"/>
</dbReference>
<dbReference type="Gene3D" id="2.60.90.20">
    <property type="entry name" value="Virus attachment protein , globular domain"/>
    <property type="match status" value="1"/>
</dbReference>
<dbReference type="InterPro" id="IPR008982">
    <property type="entry name" value="Adenovirus_pIV-like_att"/>
</dbReference>
<dbReference type="InterPro" id="IPR002592">
    <property type="entry name" value="S1_C"/>
</dbReference>
<dbReference type="Pfam" id="PF01664">
    <property type="entry name" value="Reo_sigma1"/>
    <property type="match status" value="1"/>
</dbReference>
<dbReference type="SUPFAM" id="SSF57997">
    <property type="entry name" value="Tropomyosin"/>
    <property type="match status" value="1"/>
</dbReference>
<dbReference type="SUPFAM" id="SSF49835">
    <property type="entry name" value="Virus attachment protein globular domain"/>
    <property type="match status" value="1"/>
</dbReference>
<feature type="chain" id="PRO_0000040667" description="Outer capsid protein sigma-1">
    <location>
        <begin position="1"/>
        <end position="470"/>
    </location>
</feature>
<feature type="region of interest" description="Tail">
    <location>
        <begin position="1"/>
        <end position="324"/>
    </location>
</feature>
<feature type="region of interest" description="Head">
    <location>
        <begin position="325"/>
        <end position="470"/>
    </location>
</feature>
<feature type="coiled-coil region" evidence="2">
    <location>
        <begin position="26"/>
        <end position="46"/>
    </location>
</feature>
<feature type="glycosylation site" description="N-linked (GlcNAc...) asparagine; by host" evidence="2">
    <location>
        <position position="21"/>
    </location>
</feature>
<feature type="glycosylation site" description="N-linked (GlcNAc...) asparagine; by host" evidence="2">
    <location>
        <position position="121"/>
    </location>
</feature>
<feature type="glycosylation site" description="N-linked (GlcNAc...) asparagine; by host" evidence="2">
    <location>
        <position position="205"/>
    </location>
</feature>
<feature type="glycosylation site" description="N-linked (GlcNAc...) asparagine; by host" evidence="2">
    <location>
        <position position="353"/>
    </location>
</feature>
<feature type="sequence conflict" description="In Ref. 1; AAA66877 and 2; AAA47276." evidence="3" ref="1 2">
    <original>V</original>
    <variation>G</variation>
    <location>
        <position position="91"/>
    </location>
</feature>
<feature type="sequence conflict" description="In Ref. 1; AAA66877." evidence="3" ref="1">
    <original>S</original>
    <variation>F</variation>
    <location>
        <position position="169"/>
    </location>
</feature>
<feature type="sequence conflict" description="In Ref. 2; AAA47276." evidence="3" ref="2">
    <original>V</original>
    <variation>L</variation>
    <location>
        <position position="384"/>
    </location>
</feature>
<feature type="sequence conflict" description="In Ref. 4; AAA47242." evidence="3" ref="4">
    <original>L</original>
    <variation>W</variation>
    <location>
        <position position="409"/>
    </location>
</feature>
<feature type="helix" evidence="7">
    <location>
        <begin position="30"/>
        <end position="156"/>
    </location>
</feature>
<feature type="strand" evidence="8">
    <location>
        <begin position="187"/>
        <end position="190"/>
    </location>
</feature>
<feature type="strand" evidence="8">
    <location>
        <begin position="193"/>
        <end position="196"/>
    </location>
</feature>
<feature type="strand" evidence="8">
    <location>
        <begin position="202"/>
        <end position="204"/>
    </location>
</feature>
<feature type="strand" evidence="8">
    <location>
        <begin position="210"/>
        <end position="212"/>
    </location>
</feature>
<feature type="helix" evidence="8">
    <location>
        <begin position="215"/>
        <end position="217"/>
    </location>
</feature>
<feature type="strand" evidence="8">
    <location>
        <begin position="219"/>
        <end position="224"/>
    </location>
</feature>
<feature type="strand" evidence="8">
    <location>
        <begin position="227"/>
        <end position="230"/>
    </location>
</feature>
<feature type="turn" evidence="8">
    <location>
        <begin position="234"/>
        <end position="236"/>
    </location>
</feature>
<feature type="strand" evidence="8">
    <location>
        <begin position="237"/>
        <end position="239"/>
    </location>
</feature>
<feature type="strand" evidence="8">
    <location>
        <begin position="245"/>
        <end position="247"/>
    </location>
</feature>
<feature type="strand" evidence="4">
    <location>
        <begin position="274"/>
        <end position="278"/>
    </location>
</feature>
<feature type="strand" evidence="4">
    <location>
        <begin position="281"/>
        <end position="285"/>
    </location>
</feature>
<feature type="turn" evidence="4">
    <location>
        <begin position="290"/>
        <end position="292"/>
    </location>
</feature>
<feature type="strand" evidence="4">
    <location>
        <begin position="293"/>
        <end position="296"/>
    </location>
</feature>
<feature type="strand" evidence="4">
    <location>
        <begin position="299"/>
        <end position="304"/>
    </location>
</feature>
<feature type="strand" evidence="6">
    <location>
        <begin position="315"/>
        <end position="318"/>
    </location>
</feature>
<feature type="turn" evidence="6">
    <location>
        <begin position="319"/>
        <end position="322"/>
    </location>
</feature>
<feature type="strand" evidence="6">
    <location>
        <begin position="323"/>
        <end position="326"/>
    </location>
</feature>
<feature type="helix" evidence="6">
    <location>
        <begin position="328"/>
        <end position="331"/>
    </location>
</feature>
<feature type="strand" evidence="6">
    <location>
        <begin position="333"/>
        <end position="345"/>
    </location>
</feature>
<feature type="strand" evidence="6">
    <location>
        <begin position="348"/>
        <end position="361"/>
    </location>
</feature>
<feature type="strand" evidence="6">
    <location>
        <begin position="364"/>
        <end position="369"/>
    </location>
</feature>
<feature type="strand" evidence="6">
    <location>
        <begin position="372"/>
        <end position="375"/>
    </location>
</feature>
<feature type="strand" evidence="6">
    <location>
        <begin position="379"/>
        <end position="386"/>
    </location>
</feature>
<feature type="turn" evidence="5">
    <location>
        <begin position="387"/>
        <end position="390"/>
    </location>
</feature>
<feature type="helix" evidence="6">
    <location>
        <begin position="397"/>
        <end position="400"/>
    </location>
</feature>
<feature type="strand" evidence="6">
    <location>
        <begin position="409"/>
        <end position="420"/>
    </location>
</feature>
<feature type="strand" evidence="6">
    <location>
        <begin position="423"/>
        <end position="437"/>
    </location>
</feature>
<feature type="strand" evidence="6">
    <location>
        <begin position="440"/>
        <end position="449"/>
    </location>
</feature>
<feature type="strand" evidence="6">
    <location>
        <begin position="454"/>
        <end position="458"/>
    </location>
</feature>
<feature type="strand" evidence="6">
    <location>
        <begin position="461"/>
        <end position="466"/>
    </location>
</feature>
<name>SIGM1_REOVL</name>
<sequence length="470" mass="51404">MDASLITEIRKIVLQLSVSSNGSQSKEIEEIKKQVQVNVDDIRAANIKLDGLGRQIADISNSISTIESRLGEMDNRLVGISSQVTQLSNSVSQNTQSISSLGDRINAVEPRVDSLDTVTSNLTGRTSTLEADVGSLRTELAALTTRVTTEVTRLDGLINSGQNSIGELSTRLSNVETSMVTTAGRGLQKNGNTLNVIVGNGMWFNSSNQLQLDLSGQSKGVGFVGTGMVVKIDTNYFAYNSNGEITLVSQINELPSRVSTLESAKIDSVLPPLTVREASGVRTLSFGYDTSDFTIINSVLSLRSRLTLPTYRYPLELDTANNRVQVADRFGMRTGTWTGQLQYQHPQLSWRANVTLNLMKVDDWLVLSFSQMTTNSIMADGKFVINFVSGLSSGWQTGDTEPSSTIDPLSTTFAAVQFLNNGQRIDAFRIMGVSEWTDGELEIKNYGGTYTGHTQVYWAPWTIMYPCNVR</sequence>
<protein>
    <recommendedName>
        <fullName>Outer capsid protein sigma-1</fullName>
        <shortName>Sigma1</shortName>
    </recommendedName>
    <alternativeName>
        <fullName>Cell attachment protein</fullName>
    </alternativeName>
    <alternativeName>
        <fullName>Hemagglutinin</fullName>
    </alternativeName>
</protein>
<reference key="1">
    <citation type="journal article" date="1985" name="Proc. Natl. Acad. Sci. U.S.A.">
        <title>Sequences of the S1 genes of the three serotypes of reovirus.</title>
        <authorList>
            <person name="Cashdollar L.W."/>
            <person name="Chmelo R.A."/>
            <person name="Wiener J.R."/>
            <person name="Joklik W.K."/>
        </authorList>
    </citation>
    <scope>NUCLEOTIDE SEQUENCE [GENOMIC RNA]</scope>
</reference>
<reference key="2">
    <citation type="journal article" date="1986" name="Biochem. Biophys. Res. Commun.">
        <title>Biosynthesis of reovirus-specified polypeptides. Molecular cDNA cloning and nucleotide sequence of the reovirus serotype 1 Lang strain bicistronic s1 mRNA which encodes the minor capsid polypeptide sigma 1a and the nonstructural polypeptide sigma 1bNS.</title>
        <authorList>
            <person name="Munemitsu S.M."/>
            <person name="Atwater J.A."/>
            <person name="Samuel C.E."/>
        </authorList>
    </citation>
    <scope>NUCLEOTIDE SEQUENCE [GENOMIC RNA]</scope>
</reference>
<reference key="3">
    <citation type="journal article" date="1990" name="Virology">
        <title>Identification of conserved domains in the cell attachment proteins of the three serotypes of reovirus.</title>
        <authorList>
            <person name="Duncan R."/>
            <person name="Horne D."/>
            <person name="Cashdollar L.W."/>
            <person name="Joklik W.K."/>
            <person name="Lee P.W.K."/>
        </authorList>
    </citation>
    <scope>NUCLEOTIDE SEQUENCE [GENOMIC RNA]</scope>
</reference>
<reference key="4">
    <citation type="journal article" date="1990" name="J. Virol.">
        <title>Structure of the reovirus cell-attachment protein: a model for the domain organization of sigma 1.</title>
        <authorList>
            <person name="Nibert M.L."/>
            <person name="Dermody T.S."/>
            <person name="Fields B.N."/>
        </authorList>
    </citation>
    <scope>NUCLEOTIDE SEQUENCE [GENOMIC RNA]</scope>
</reference>
<reference key="5">
    <citation type="journal article" date="2007" name="Cell Host Microbe">
        <title>A plasmid-based reverse genetics system for animal double-stranded RNA viruses.</title>
        <authorList>
            <person name="Kobayashi T."/>
            <person name="Antar A.A."/>
            <person name="Boehme K.W."/>
            <person name="Danthi P."/>
            <person name="Eby E.A."/>
            <person name="Guglielmi K.M."/>
            <person name="Holm G.H."/>
            <person name="Johnson E.M."/>
            <person name="Maginnis M.S."/>
            <person name="Naik S."/>
            <person name="Skelton W.B."/>
            <person name="Wetzel J.D."/>
            <person name="Wilson G.J."/>
            <person name="Chappell J.D."/>
            <person name="Dermody T.S."/>
        </authorList>
    </citation>
    <scope>NUCLEOTIDE SEQUENCE [GENOMIC RNA]</scope>
    <source>
        <strain>Infectious clone</strain>
    </source>
</reference>
<reference key="6">
    <citation type="journal article" date="1980" name="Virology">
        <title>Nature of the 3'-terminal sequences of the plus and minus strands of the S1 gene of reovirus serotypes 1, 2 and 3.</title>
        <authorList>
            <person name="Li J.K.-K."/>
            <person name="Keene J.D."/>
            <person name="Scheible P.P."/>
            <person name="Joklik W.K."/>
        </authorList>
    </citation>
    <scope>NUCLEOTIDE SEQUENCE [GENOMIC RNA] OF 1-21</scope>
</reference>
<proteinExistence type="evidence at protein level"/>
<organism>
    <name type="scientific">Reovirus type 1 (strain Lang)</name>
    <name type="common">T1L</name>
    <name type="synonym">Mammalian orthoreovirus 1</name>
    <dbReference type="NCBI Taxonomy" id="10884"/>
    <lineage>
        <taxon>Viruses</taxon>
        <taxon>Riboviria</taxon>
        <taxon>Orthornavirae</taxon>
        <taxon>Duplornaviricota</taxon>
        <taxon>Resentoviricetes</taxon>
        <taxon>Reovirales</taxon>
        <taxon>Spinareoviridae</taxon>
        <taxon>Orthoreovirus</taxon>
        <taxon>Mammalian orthoreovirus</taxon>
    </lineage>
</organism>
<comment type="function">
    <text evidence="1">Fiber-like molecule that attaches the virion to the host cell membrane by binding to the primary receptor F11R/JAM-A and to sialic acid containing proteins (coreceptor). The interaction of sigma-1 with F11R is required for NF-kB activation and apoptosis. Binding to both sialic acid and F11R is required to induce maximal levels of apoptosis (By similarity).</text>
</comment>
<comment type="subunit">
    <text evidence="1">Homotrimer. Interacts (via the head region) with human F11R (By similarity).</text>
</comment>
<comment type="subcellular location">
    <subcellularLocation>
        <location evidence="1">Virion</location>
    </subcellularLocation>
    <text evidence="1">Found in the outer capsid (36 copies).</text>
</comment>
<comment type="PTM">
    <text evidence="1">Undergoes dramatic conformational rearrangements during viral disassembly in the endocytic pathway.</text>
</comment>
<comment type="similarity">
    <text evidence="3">Belongs to the orthoreovirus sigma-1 protein family.</text>
</comment>
<comment type="sequence caution" evidence="3">
    <conflict type="frameshift">
        <sequence resource="EMBL-CDS" id="AAA47276"/>
    </conflict>
</comment>
<comment type="sequence caution" evidence="3">
    <conflict type="frameshift">
        <sequence resource="EMBL-CDS" id="AAA66877"/>
    </conflict>
</comment>
<keyword id="KW-0002">3D-structure</keyword>
<keyword id="KW-0167">Capsid protein</keyword>
<keyword id="KW-0175">Coiled coil</keyword>
<keyword id="KW-0325">Glycoprotein</keyword>
<keyword id="KW-0348">Hemagglutinin</keyword>
<keyword id="KW-0945">Host-virus interaction</keyword>
<keyword id="KW-1152">Outer capsid protein</keyword>
<keyword id="KW-1185">Reference proteome</keyword>
<keyword id="KW-1161">Viral attachment to host cell</keyword>
<keyword id="KW-0946">Virion</keyword>
<keyword id="KW-1160">Virus entry into host cell</keyword>
<gene>
    <name type="primary">S1</name>
</gene>
<evidence type="ECO:0000250" key="1"/>
<evidence type="ECO:0000255" key="2"/>
<evidence type="ECO:0000305" key="3"/>
<evidence type="ECO:0007829" key="4">
    <source>
        <dbReference type="PDB" id="4GU4"/>
    </source>
</evidence>
<evidence type="ECO:0007829" key="5">
    <source>
        <dbReference type="PDB" id="4ODB"/>
    </source>
</evidence>
<evidence type="ECO:0007829" key="6">
    <source>
        <dbReference type="PDB" id="4XC5"/>
    </source>
</evidence>
<evidence type="ECO:0007829" key="7">
    <source>
        <dbReference type="PDB" id="6GAJ"/>
    </source>
</evidence>
<evidence type="ECO:0007829" key="8">
    <source>
        <dbReference type="PDB" id="6GAO"/>
    </source>
</evidence>
<organismHost>
    <name type="scientific">Mammalia</name>
    <dbReference type="NCBI Taxonomy" id="40674"/>
</organismHost>
<accession>P04506</accession>
<accession>A4ZY30</accession>
<accession>P07937</accession>